<dbReference type="EMBL" id="DQ826524">
    <property type="protein sequence ID" value="ABI15943.1"/>
    <property type="molecule type" value="mRNA"/>
</dbReference>
<dbReference type="EMBL" id="DQ835372">
    <property type="protein sequence ID" value="ABI20177.1"/>
    <property type="molecule type" value="mRNA"/>
</dbReference>
<dbReference type="PDB" id="4JD9">
    <property type="method" value="X-ray"/>
    <property type="resolution" value="2.60 A"/>
    <property type="chains" value="A/B/C/D/E/F/G=21-142"/>
</dbReference>
<dbReference type="PDBsum" id="4JD9"/>
<dbReference type="SMR" id="Q06K46"/>
<dbReference type="EvolutionaryTrace" id="Q06K46"/>
<dbReference type="GO" id="GO:0005576">
    <property type="term" value="C:extracellular region"/>
    <property type="evidence" value="ECO:0007669"/>
    <property type="project" value="UniProtKB-SubCell"/>
</dbReference>
<dbReference type="GO" id="GO:0140313">
    <property type="term" value="F:molecular sequestering activity"/>
    <property type="evidence" value="ECO:0000314"/>
    <property type="project" value="UniProtKB"/>
</dbReference>
<dbReference type="GO" id="GO:0005549">
    <property type="term" value="F:odorant binding"/>
    <property type="evidence" value="ECO:0007669"/>
    <property type="project" value="InterPro"/>
</dbReference>
<dbReference type="GO" id="GO:0090729">
    <property type="term" value="F:toxin activity"/>
    <property type="evidence" value="ECO:0007669"/>
    <property type="project" value="UniProtKB-KW"/>
</dbReference>
<dbReference type="GO" id="GO:0035899">
    <property type="term" value="P:suppression of blood coagulation in another organism"/>
    <property type="evidence" value="ECO:0000314"/>
    <property type="project" value="UniProtKB"/>
</dbReference>
<dbReference type="Gene3D" id="1.10.238.20">
    <property type="entry name" value="Pheromone/general odorant binding protein domain"/>
    <property type="match status" value="1"/>
</dbReference>
<dbReference type="InterPro" id="IPR036728">
    <property type="entry name" value="PBP_GOBP_sf"/>
</dbReference>
<dbReference type="SUPFAM" id="SSF47565">
    <property type="entry name" value="Insect pheromone/odorant-binding proteins"/>
    <property type="match status" value="1"/>
</dbReference>
<sequence length="142" mass="16599">MKYLGLALISAVFLIGTCQAETPSQKCEEKYKENAERKACIHHCKYQYYGFIDVNYNIAQPEIRKFSNVLMDYGVVDRSKKRELKKVMHDCAKKIKKEARTGDHWLNCRTSIDYYRCVLTSKLIGPQRFDKAIQDYDKTISV</sequence>
<reference evidence="7" key="1">
    <citation type="journal article" date="2006" name="BMC Genomics">
        <title>High degree of conservancy among secreted salivary gland proteins from two geographically distant Phlebotomus duboscqi sandflies populations (Mali and Kenya).</title>
        <authorList>
            <person name="Kato H."/>
            <person name="Anderson J.M."/>
            <person name="Kamhawi S."/>
            <person name="Oliveira F."/>
            <person name="Lawyer P.G."/>
            <person name="Pham V.M."/>
            <person name="Sangare C.S."/>
            <person name="Samake S."/>
            <person name="Sissoko I."/>
            <person name="Garfield M."/>
            <person name="Sigutova L."/>
            <person name="Volf P."/>
            <person name="Doumbia S."/>
            <person name="Valenzuela J.G."/>
        </authorList>
    </citation>
    <scope>NUCLEOTIDE SEQUENCE [LARGE SCALE MRNA]</scope>
    <scope>TISSUE SPECIFICITY</scope>
    <source>
        <strain evidence="6">Mali</strain>
    </source>
</reference>
<reference evidence="8" key="2">
    <citation type="journal article" date="2013" name="Arterioscler. Thromb. Vasc. Biol.">
        <title>Novel family of insect salivary inhibitors blocks contact pathway activation by binding to polyphosphate, heparin, and dextran sulfate.</title>
        <authorList>
            <person name="Alvarenga P.H."/>
            <person name="Xu X."/>
            <person name="Oliveira F."/>
            <person name="Chagas A.C."/>
            <person name="Nascimento C.R."/>
            <person name="Francischetti I.M."/>
            <person name="Juliano M.A."/>
            <person name="Juliano L."/>
            <person name="Scharfstein J."/>
            <person name="Valenzuela J.G."/>
            <person name="Ribeiro J.M."/>
            <person name="Andersen J.F."/>
        </authorList>
    </citation>
    <scope>X-RAY CRYSTALLOGRAPHY (2.60 ANGSTROMS) OF 21-142</scope>
    <scope>FUNCTION</scope>
    <scope>DISULFIDE BONDS</scope>
</reference>
<comment type="function">
    <text evidence="3">Inhibits contact coagulation pathway activation in the host by sequestering anionic polymers, such as dextran sulfate and heparin, and thus blocking interaction of protein components of the pathway with negatively charged surfaces (PubMed:24092749). Inhibits dextran sulfate-mediated autoactivation of host coagulation factor XII (F12) (PubMed:24092749). Inhibits dextran sulfate-mediated activation of host factor XI (F11) by activated F12 (PubMed:24092749). Inhibits polyphosphate-induced plasma extravasation at the injection site in mouse model, probably via inhibition of bradykinin generation in host skin (PubMed:24092749).</text>
</comment>
<comment type="subcellular location">
    <subcellularLocation>
        <location evidence="5">Secreted</location>
    </subcellularLocation>
</comment>
<comment type="tissue specificity">
    <text evidence="2">Female salivary gland.</text>
</comment>
<comment type="similarity">
    <text evidence="5">Belongs to the PBP/GOBP family.</text>
</comment>
<name>SP15B_PHLDU</name>
<proteinExistence type="evidence at protein level"/>
<organism evidence="7">
    <name type="scientific">Phlebotomus duboscqi</name>
    <name type="common">Sandfly</name>
    <dbReference type="NCBI Taxonomy" id="37738"/>
    <lineage>
        <taxon>Eukaryota</taxon>
        <taxon>Metazoa</taxon>
        <taxon>Ecdysozoa</taxon>
        <taxon>Arthropoda</taxon>
        <taxon>Hexapoda</taxon>
        <taxon>Insecta</taxon>
        <taxon>Pterygota</taxon>
        <taxon>Neoptera</taxon>
        <taxon>Endopterygota</taxon>
        <taxon>Diptera</taxon>
        <taxon>Nematocera</taxon>
        <taxon>Psychodoidea</taxon>
        <taxon>Psychodidae</taxon>
        <taxon>Phlebotomus</taxon>
        <taxon>Phlebotomus</taxon>
    </lineage>
</organism>
<gene>
    <name evidence="7" type="primary">K03</name>
    <name evidence="6" type="synonym">M03</name>
</gene>
<keyword id="KW-0002">3D-structure</keyword>
<keyword id="KW-1203">Blood coagulation cascade inhibiting toxin</keyword>
<keyword id="KW-1015">Disulfide bond</keyword>
<keyword id="KW-1199">Hemostasis impairing toxin</keyword>
<keyword id="KW-0964">Secreted</keyword>
<keyword id="KW-0732">Signal</keyword>
<keyword id="KW-0800">Toxin</keyword>
<evidence type="ECO:0000255" key="1"/>
<evidence type="ECO:0000269" key="2">
    <source>
    </source>
</evidence>
<evidence type="ECO:0000269" key="3">
    <source>
    </source>
</evidence>
<evidence type="ECO:0000303" key="4">
    <source>
    </source>
</evidence>
<evidence type="ECO:0000305" key="5"/>
<evidence type="ECO:0000312" key="6">
    <source>
        <dbReference type="EMBL" id="ABI15943.1"/>
    </source>
</evidence>
<evidence type="ECO:0000312" key="7">
    <source>
        <dbReference type="EMBL" id="ABI20177.1"/>
    </source>
</evidence>
<evidence type="ECO:0007744" key="8">
    <source>
        <dbReference type="PDB" id="4JD9"/>
    </source>
</evidence>
<evidence type="ECO:0007829" key="9">
    <source>
        <dbReference type="PDB" id="4JD9"/>
    </source>
</evidence>
<accession>Q06K46</accession>
<feature type="signal peptide" evidence="1">
    <location>
        <begin position="1"/>
        <end position="20"/>
    </location>
</feature>
<feature type="chain" id="PRO_0000461519" description="Salivary protein 15b" evidence="1">
    <location>
        <begin position="21"/>
        <end position="142"/>
    </location>
</feature>
<feature type="disulfide bond" evidence="3 8">
    <location>
        <begin position="27"/>
        <end position="44"/>
    </location>
</feature>
<feature type="disulfide bond" evidence="3 8">
    <location>
        <begin position="40"/>
        <end position="108"/>
    </location>
</feature>
<feature type="disulfide bond" evidence="3 8">
    <location>
        <begin position="91"/>
        <end position="117"/>
    </location>
</feature>
<feature type="helix" evidence="9">
    <location>
        <begin position="23"/>
        <end position="30"/>
    </location>
</feature>
<feature type="helix" evidence="9">
    <location>
        <begin position="40"/>
        <end position="48"/>
    </location>
</feature>
<feature type="helix" evidence="9">
    <location>
        <begin position="60"/>
        <end position="72"/>
    </location>
</feature>
<feature type="helix" evidence="9">
    <location>
        <begin position="78"/>
        <end position="80"/>
    </location>
</feature>
<feature type="helix" evidence="9">
    <location>
        <begin position="81"/>
        <end position="101"/>
    </location>
</feature>
<feature type="helix" evidence="9">
    <location>
        <begin position="108"/>
        <end position="119"/>
    </location>
</feature>
<feature type="helix" evidence="9">
    <location>
        <begin position="126"/>
        <end position="137"/>
    </location>
</feature>
<protein>
    <recommendedName>
        <fullName evidence="5">Salivary protein 15b</fullName>
        <shortName evidence="4">PdSP15b</shortName>
    </recommendedName>
</protein>